<sequence length="102" mass="10523">MSLFKILVAAATVATALAAPHEHKKPHPSYGDANAQCGNHQKLSCCNRGDSGGVLDGLLGGNCQPINILALLPIQNQCTNQVACCTGNSNGLINIPCTNVNL</sequence>
<name>HYD1_METRA</name>
<evidence type="ECO:0000250" key="1">
    <source>
        <dbReference type="UniProtKB" id="Q04571"/>
    </source>
</evidence>
<evidence type="ECO:0000255" key="2"/>
<evidence type="ECO:0000269" key="3">
    <source>
    </source>
</evidence>
<evidence type="ECO:0000303" key="4">
    <source>
    </source>
</evidence>
<evidence type="ECO:0000303" key="5">
    <source>
    </source>
</evidence>
<evidence type="ECO:0000305" key="6"/>
<evidence type="ECO:0000305" key="7">
    <source>
    </source>
</evidence>
<keyword id="KW-0134">Cell wall</keyword>
<keyword id="KW-1015">Disulfide bond</keyword>
<keyword id="KW-0964">Secreted</keyword>
<keyword id="KW-0732">Signal</keyword>
<keyword id="KW-0843">Virulence</keyword>
<proteinExistence type="inferred from homology"/>
<accession>E9FDE9</accession>
<gene>
    <name evidence="5" type="primary">hyd1</name>
    <name type="ORF">MAA_10298</name>
</gene>
<feature type="signal peptide" evidence="2">
    <location>
        <begin position="1"/>
        <end position="18"/>
    </location>
</feature>
<feature type="chain" id="PRO_5013987372" description="Class I hydrophobin 1">
    <location>
        <begin position="19"/>
        <end position="102"/>
    </location>
</feature>
<feature type="disulfide bond" evidence="1">
    <location>
        <begin position="37"/>
        <end position="84"/>
    </location>
</feature>
<feature type="disulfide bond" evidence="1">
    <location>
        <begin position="45"/>
        <end position="78"/>
    </location>
</feature>
<feature type="disulfide bond" evidence="1">
    <location>
        <begin position="46"/>
        <end position="63"/>
    </location>
</feature>
<feature type="disulfide bond" evidence="1">
    <location>
        <begin position="85"/>
        <end position="97"/>
    </location>
</feature>
<comment type="function">
    <text evidence="3 7">Aerial growth, conidiation, and dispersal of filamentous fungi in the environment rely upon a capability of their secreting small amphipathic proteins called hydrophobins (HPBs) with low sequence identity. Class I can self-assemble into an outermost layer of rodlet bundles on aerial cell surfaces, conferring cellular hydrophobicity that supports fungal growth, development and dispersal; whereas Class II form highly ordered films at water-air interfaces through intermolecular interactions but contribute nothing to the rodlet structure (Probable). Hyd1 is essential for stress tolerance, conidial hydrophobicity, adhesion to insect cuticle, and insect infectivity/pathogenicity (PubMed:37844657). Plays a neglectable role in hyphal growth and asexual development (PubMed:37844657).</text>
</comment>
<comment type="subcellular location">
    <subcellularLocation>
        <location evidence="7">Secreted</location>
    </subcellularLocation>
    <subcellularLocation>
        <location evidence="7">Secreted</location>
        <location evidence="7">Cell wall</location>
    </subcellularLocation>
</comment>
<comment type="disruption phenotype">
    <text evidence="3">Leads to disordered conidial rodlet bundles and sharply reduced conidial hydrophobicity (PubMed:37844657). Shows also reduced, adhesion to insect cuticle, insect pathogenicity via normal cuticle infection, UVB resistance and heat tolerance (PubMed:37844657).</text>
</comment>
<comment type="similarity">
    <text evidence="6">Belongs to the fungal hydrophobin family.</text>
</comment>
<organism>
    <name type="scientific">Metarhizium robertsii (strain ARSEF 23 / ATCC MYA-3075)</name>
    <name type="common">Metarhizium anisopliae (strain ARSEF 23)</name>
    <dbReference type="NCBI Taxonomy" id="655844"/>
    <lineage>
        <taxon>Eukaryota</taxon>
        <taxon>Fungi</taxon>
        <taxon>Dikarya</taxon>
        <taxon>Ascomycota</taxon>
        <taxon>Pezizomycotina</taxon>
        <taxon>Sordariomycetes</taxon>
        <taxon>Hypocreomycetidae</taxon>
        <taxon>Hypocreales</taxon>
        <taxon>Clavicipitaceae</taxon>
        <taxon>Metarhizium</taxon>
    </lineage>
</organism>
<protein>
    <recommendedName>
        <fullName evidence="4">Class I hydrophobin 1</fullName>
    </recommendedName>
</protein>
<dbReference type="EMBL" id="ADNJ02000028">
    <property type="protein sequence ID" value="EFY94230.1"/>
    <property type="molecule type" value="Genomic_DNA"/>
</dbReference>
<dbReference type="RefSeq" id="XP_007826487.1">
    <property type="nucleotide sequence ID" value="XM_007828296.1"/>
</dbReference>
<dbReference type="GeneID" id="19264584"/>
<dbReference type="KEGG" id="maj:MAA_10298"/>
<dbReference type="HOGENOM" id="CLU_164195_0_0_1"/>
<dbReference type="OrthoDB" id="4225815at2759"/>
<dbReference type="PHI-base" id="PHI:9536"/>
<dbReference type="Proteomes" id="UP000002498">
    <property type="component" value="Unassembled WGS sequence"/>
</dbReference>
<dbReference type="GO" id="GO:0005576">
    <property type="term" value="C:extracellular region"/>
    <property type="evidence" value="ECO:0007669"/>
    <property type="project" value="UniProtKB-KW"/>
</dbReference>
<dbReference type="GO" id="GO:0009277">
    <property type="term" value="C:fungal-type cell wall"/>
    <property type="evidence" value="ECO:0007669"/>
    <property type="project" value="InterPro"/>
</dbReference>
<dbReference type="GO" id="GO:0005199">
    <property type="term" value="F:structural constituent of cell wall"/>
    <property type="evidence" value="ECO:0007669"/>
    <property type="project" value="InterPro"/>
</dbReference>
<dbReference type="CDD" id="cd23507">
    <property type="entry name" value="hydrophobin_I"/>
    <property type="match status" value="1"/>
</dbReference>
<dbReference type="InterPro" id="IPR001338">
    <property type="entry name" value="Hydrophobin"/>
</dbReference>
<dbReference type="Pfam" id="PF01185">
    <property type="entry name" value="Hydrophobin"/>
    <property type="match status" value="1"/>
</dbReference>
<dbReference type="SMART" id="SM00075">
    <property type="entry name" value="HYDRO"/>
    <property type="match status" value="1"/>
</dbReference>
<reference key="1">
    <citation type="journal article" date="2011" name="PLoS Genet.">
        <title>Genome sequencing and comparative transcriptomics of the model entomopathogenic fungi Metarhizium anisopliae and M. acridum.</title>
        <authorList>
            <person name="Gao Q."/>
            <person name="Jin K."/>
            <person name="Ying S.-H."/>
            <person name="Zhang Y."/>
            <person name="Xiao G."/>
            <person name="Shang Y."/>
            <person name="Duan Z."/>
            <person name="Hu X."/>
            <person name="Xie X.-Q."/>
            <person name="Zhou G."/>
            <person name="Peng G."/>
            <person name="Luo Z."/>
            <person name="Huang W."/>
            <person name="Wang B."/>
            <person name="Fang W."/>
            <person name="Wang S."/>
            <person name="Zhong Y."/>
            <person name="Ma L.-J."/>
            <person name="St Leger R.J."/>
            <person name="Zhao G.-P."/>
            <person name="Pei Y."/>
            <person name="Feng M.-G."/>
            <person name="Xia Y."/>
            <person name="Wang C."/>
        </authorList>
    </citation>
    <scope>NUCLEOTIDE SEQUENCE [LARGE SCALE GENOMIC DNA]</scope>
    <source>
        <strain>ARSEF 23 / ATCC MYA-3075</strain>
    </source>
</reference>
<reference key="2">
    <citation type="journal article" date="2014" name="Proc. Natl. Acad. Sci. U.S.A.">
        <title>Trajectory and genomic determinants of fungal-pathogen speciation and host adaptation.</title>
        <authorList>
            <person name="Hu X."/>
            <person name="Xiao G."/>
            <person name="Zheng P."/>
            <person name="Shang Y."/>
            <person name="Su Y."/>
            <person name="Zhang X."/>
            <person name="Liu X."/>
            <person name="Zhan S."/>
            <person name="St Leger R.J."/>
            <person name="Wang C."/>
        </authorList>
    </citation>
    <scope>GENOME REANNOTATION</scope>
    <source>
        <strain>ARSEF 23 / ATCC MYA-3075</strain>
    </source>
</reference>
<reference key="3">
    <citation type="journal article" date="2023" name="J. Invertebr. Pathol.">
        <title>Only one of three hydrophobins (Hyd1-3) contributes to conidial hydrophobicity and insect pathogenicity of Metarhizium robertsii.</title>
        <authorList>
            <person name="Zhang J.G."/>
            <person name="Xu S.Y."/>
            <person name="Ying S.H."/>
            <person name="Feng M.G."/>
        </authorList>
    </citation>
    <scope>FUNCTION</scope>
    <scope>DISRUPTION PHENOTYPE</scope>
</reference>